<gene>
    <name evidence="1" type="primary">atpF</name>
    <name type="ordered locus">Daud_2141</name>
</gene>
<dbReference type="EMBL" id="CP000860">
    <property type="protein sequence ID" value="ACA60628.1"/>
    <property type="molecule type" value="Genomic_DNA"/>
</dbReference>
<dbReference type="RefSeq" id="WP_012303203.1">
    <property type="nucleotide sequence ID" value="NC_010424.1"/>
</dbReference>
<dbReference type="SMR" id="B1I6L8"/>
<dbReference type="STRING" id="477974.Daud_2141"/>
<dbReference type="KEGG" id="dau:Daud_2141"/>
<dbReference type="eggNOG" id="COG0711">
    <property type="taxonomic scope" value="Bacteria"/>
</dbReference>
<dbReference type="HOGENOM" id="CLU_079215_4_2_9"/>
<dbReference type="OrthoDB" id="282095at2"/>
<dbReference type="Proteomes" id="UP000008544">
    <property type="component" value="Chromosome"/>
</dbReference>
<dbReference type="GO" id="GO:0005886">
    <property type="term" value="C:plasma membrane"/>
    <property type="evidence" value="ECO:0007669"/>
    <property type="project" value="UniProtKB-SubCell"/>
</dbReference>
<dbReference type="GO" id="GO:0045259">
    <property type="term" value="C:proton-transporting ATP synthase complex"/>
    <property type="evidence" value="ECO:0007669"/>
    <property type="project" value="UniProtKB-KW"/>
</dbReference>
<dbReference type="GO" id="GO:0046933">
    <property type="term" value="F:proton-transporting ATP synthase activity, rotational mechanism"/>
    <property type="evidence" value="ECO:0007669"/>
    <property type="project" value="UniProtKB-UniRule"/>
</dbReference>
<dbReference type="GO" id="GO:0046961">
    <property type="term" value="F:proton-transporting ATPase activity, rotational mechanism"/>
    <property type="evidence" value="ECO:0007669"/>
    <property type="project" value="TreeGrafter"/>
</dbReference>
<dbReference type="CDD" id="cd06503">
    <property type="entry name" value="ATP-synt_Fo_b"/>
    <property type="match status" value="1"/>
</dbReference>
<dbReference type="Gene3D" id="6.10.250.1580">
    <property type="match status" value="1"/>
</dbReference>
<dbReference type="HAMAP" id="MF_01398">
    <property type="entry name" value="ATP_synth_b_bprime"/>
    <property type="match status" value="1"/>
</dbReference>
<dbReference type="InterPro" id="IPR028987">
    <property type="entry name" value="ATP_synth_B-like_membr_sf"/>
</dbReference>
<dbReference type="InterPro" id="IPR002146">
    <property type="entry name" value="ATP_synth_b/b'su_bac/chlpt"/>
</dbReference>
<dbReference type="InterPro" id="IPR005864">
    <property type="entry name" value="ATP_synth_F0_bsu_bac"/>
</dbReference>
<dbReference type="InterPro" id="IPR050059">
    <property type="entry name" value="ATP_synthase_B_chain"/>
</dbReference>
<dbReference type="NCBIfam" id="TIGR01144">
    <property type="entry name" value="ATP_synt_b"/>
    <property type="match status" value="1"/>
</dbReference>
<dbReference type="PANTHER" id="PTHR33445:SF1">
    <property type="entry name" value="ATP SYNTHASE SUBUNIT B"/>
    <property type="match status" value="1"/>
</dbReference>
<dbReference type="PANTHER" id="PTHR33445">
    <property type="entry name" value="ATP SYNTHASE SUBUNIT B', CHLOROPLASTIC"/>
    <property type="match status" value="1"/>
</dbReference>
<dbReference type="Pfam" id="PF00430">
    <property type="entry name" value="ATP-synt_B"/>
    <property type="match status" value="1"/>
</dbReference>
<dbReference type="SUPFAM" id="SSF81573">
    <property type="entry name" value="F1F0 ATP synthase subunit B, membrane domain"/>
    <property type="match status" value="1"/>
</dbReference>
<proteinExistence type="inferred from homology"/>
<name>ATPF_DESAP</name>
<keyword id="KW-0066">ATP synthesis</keyword>
<keyword id="KW-1003">Cell membrane</keyword>
<keyword id="KW-0138">CF(0)</keyword>
<keyword id="KW-0375">Hydrogen ion transport</keyword>
<keyword id="KW-0406">Ion transport</keyword>
<keyword id="KW-0472">Membrane</keyword>
<keyword id="KW-1185">Reference proteome</keyword>
<keyword id="KW-0812">Transmembrane</keyword>
<keyword id="KW-1133">Transmembrane helix</keyword>
<keyword id="KW-0813">Transport</keyword>
<sequence length="163" mass="18133">MVDLSFNATVFMQMFHFLLMLVVLRLFAYRPLMNVIEQRQAYIADEIEAAEKQKAAAAELRSQLEADLAKAREEAKAIVARATKASDEQAQAIMEQARTEAQRLKEEALAEIGREREKAIAQLKDEVASLAVLVAAKVVKDGLTIDAQHNLVQNAIKEVGQLQ</sequence>
<feature type="chain" id="PRO_0000368459" description="ATP synthase subunit b">
    <location>
        <begin position="1"/>
        <end position="163"/>
    </location>
</feature>
<feature type="transmembrane region" description="Helical" evidence="1">
    <location>
        <begin position="10"/>
        <end position="29"/>
    </location>
</feature>
<organism>
    <name type="scientific">Desulforudis audaxviator (strain MP104C)</name>
    <dbReference type="NCBI Taxonomy" id="477974"/>
    <lineage>
        <taxon>Bacteria</taxon>
        <taxon>Bacillati</taxon>
        <taxon>Bacillota</taxon>
        <taxon>Clostridia</taxon>
        <taxon>Thermoanaerobacterales</taxon>
        <taxon>Candidatus Desulforudaceae</taxon>
        <taxon>Candidatus Desulforudis</taxon>
    </lineage>
</organism>
<accession>B1I6L8</accession>
<protein>
    <recommendedName>
        <fullName evidence="1">ATP synthase subunit b</fullName>
    </recommendedName>
    <alternativeName>
        <fullName evidence="1">ATP synthase F(0) sector subunit b</fullName>
    </alternativeName>
    <alternativeName>
        <fullName evidence="1">ATPase subunit I</fullName>
    </alternativeName>
    <alternativeName>
        <fullName evidence="1">F-type ATPase subunit b</fullName>
        <shortName evidence="1">F-ATPase subunit b</shortName>
    </alternativeName>
</protein>
<reference key="1">
    <citation type="submission" date="2007-10" db="EMBL/GenBank/DDBJ databases">
        <title>Complete sequence of chromosome of Desulforudis audaxviator MP104C.</title>
        <authorList>
            <person name="Copeland A."/>
            <person name="Lucas S."/>
            <person name="Lapidus A."/>
            <person name="Barry K."/>
            <person name="Glavina del Rio T."/>
            <person name="Dalin E."/>
            <person name="Tice H."/>
            <person name="Bruce D."/>
            <person name="Pitluck S."/>
            <person name="Lowry S.R."/>
            <person name="Larimer F."/>
            <person name="Land M.L."/>
            <person name="Hauser L."/>
            <person name="Kyrpides N."/>
            <person name="Ivanova N.N."/>
            <person name="Richardson P."/>
        </authorList>
    </citation>
    <scope>NUCLEOTIDE SEQUENCE [LARGE SCALE GENOMIC DNA]</scope>
    <source>
        <strain>MP104C</strain>
    </source>
</reference>
<evidence type="ECO:0000255" key="1">
    <source>
        <dbReference type="HAMAP-Rule" id="MF_01398"/>
    </source>
</evidence>
<comment type="function">
    <text evidence="1">F(1)F(0) ATP synthase produces ATP from ADP in the presence of a proton or sodium gradient. F-type ATPases consist of two structural domains, F(1) containing the extramembraneous catalytic core and F(0) containing the membrane proton channel, linked together by a central stalk and a peripheral stalk. During catalysis, ATP synthesis in the catalytic domain of F(1) is coupled via a rotary mechanism of the central stalk subunits to proton translocation.</text>
</comment>
<comment type="function">
    <text evidence="1">Component of the F(0) channel, it forms part of the peripheral stalk, linking F(1) to F(0).</text>
</comment>
<comment type="subunit">
    <text evidence="1">F-type ATPases have 2 components, F(1) - the catalytic core - and F(0) - the membrane proton channel. F(1) has five subunits: alpha(3), beta(3), gamma(1), delta(1), epsilon(1). F(0) has three main subunits: a(1), b(2) and c(10-14). The alpha and beta chains form an alternating ring which encloses part of the gamma chain. F(1) is attached to F(0) by a central stalk formed by the gamma and epsilon chains, while a peripheral stalk is formed by the delta and b chains.</text>
</comment>
<comment type="subcellular location">
    <subcellularLocation>
        <location evidence="1">Cell membrane</location>
        <topology evidence="1">Single-pass membrane protein</topology>
    </subcellularLocation>
</comment>
<comment type="similarity">
    <text evidence="1">Belongs to the ATPase B chain family.</text>
</comment>